<feature type="chain" id="PRO_1000127178" description="Small ribosomal subunit protein uS10">
    <location>
        <begin position="1"/>
        <end position="103"/>
    </location>
</feature>
<keyword id="KW-0687">Ribonucleoprotein</keyword>
<keyword id="KW-0689">Ribosomal protein</keyword>
<protein>
    <recommendedName>
        <fullName evidence="1">Small ribosomal subunit protein uS10</fullName>
    </recommendedName>
    <alternativeName>
        <fullName evidence="2">30S ribosomal protein S10</fullName>
    </alternativeName>
</protein>
<sequence length="103" mass="11767">MQNQRIRIRLKAFDHRLIDQSTAEIVETAKRTGAQVRGPIPLPTRKERFTVLISPHVNKDARDQYEIRTHKRLVDIVEPTEKTVDALMRLDLAAGVDVQISLG</sequence>
<gene>
    <name evidence="1" type="primary">rpsJ</name>
    <name type="ordered locus">SG3998</name>
</gene>
<dbReference type="EMBL" id="AM933173">
    <property type="protein sequence ID" value="CAR39768.1"/>
    <property type="molecule type" value="Genomic_DNA"/>
</dbReference>
<dbReference type="RefSeq" id="WP_001181005.1">
    <property type="nucleotide sequence ID" value="NC_011274.1"/>
</dbReference>
<dbReference type="SMR" id="B5RH14"/>
<dbReference type="GeneID" id="98390443"/>
<dbReference type="KEGG" id="seg:SG3998"/>
<dbReference type="HOGENOM" id="CLU_122625_1_3_6"/>
<dbReference type="Proteomes" id="UP000008321">
    <property type="component" value="Chromosome"/>
</dbReference>
<dbReference type="GO" id="GO:1990904">
    <property type="term" value="C:ribonucleoprotein complex"/>
    <property type="evidence" value="ECO:0007669"/>
    <property type="project" value="UniProtKB-KW"/>
</dbReference>
<dbReference type="GO" id="GO:0005840">
    <property type="term" value="C:ribosome"/>
    <property type="evidence" value="ECO:0007669"/>
    <property type="project" value="UniProtKB-KW"/>
</dbReference>
<dbReference type="GO" id="GO:0003735">
    <property type="term" value="F:structural constituent of ribosome"/>
    <property type="evidence" value="ECO:0007669"/>
    <property type="project" value="InterPro"/>
</dbReference>
<dbReference type="GO" id="GO:0000049">
    <property type="term" value="F:tRNA binding"/>
    <property type="evidence" value="ECO:0007669"/>
    <property type="project" value="UniProtKB-UniRule"/>
</dbReference>
<dbReference type="GO" id="GO:0006412">
    <property type="term" value="P:translation"/>
    <property type="evidence" value="ECO:0007669"/>
    <property type="project" value="UniProtKB-UniRule"/>
</dbReference>
<dbReference type="FunFam" id="3.30.70.600:FF:000001">
    <property type="entry name" value="30S ribosomal protein S10"/>
    <property type="match status" value="1"/>
</dbReference>
<dbReference type="Gene3D" id="3.30.70.600">
    <property type="entry name" value="Ribosomal protein S10 domain"/>
    <property type="match status" value="1"/>
</dbReference>
<dbReference type="HAMAP" id="MF_00508">
    <property type="entry name" value="Ribosomal_uS10"/>
    <property type="match status" value="1"/>
</dbReference>
<dbReference type="InterPro" id="IPR001848">
    <property type="entry name" value="Ribosomal_uS10"/>
</dbReference>
<dbReference type="InterPro" id="IPR018268">
    <property type="entry name" value="Ribosomal_uS10_CS"/>
</dbReference>
<dbReference type="InterPro" id="IPR027486">
    <property type="entry name" value="Ribosomal_uS10_dom"/>
</dbReference>
<dbReference type="InterPro" id="IPR036838">
    <property type="entry name" value="Ribosomal_uS10_dom_sf"/>
</dbReference>
<dbReference type="NCBIfam" id="NF001861">
    <property type="entry name" value="PRK00596.1"/>
    <property type="match status" value="1"/>
</dbReference>
<dbReference type="NCBIfam" id="TIGR01049">
    <property type="entry name" value="rpsJ_bact"/>
    <property type="match status" value="1"/>
</dbReference>
<dbReference type="PANTHER" id="PTHR11700">
    <property type="entry name" value="30S RIBOSOMAL PROTEIN S10 FAMILY MEMBER"/>
    <property type="match status" value="1"/>
</dbReference>
<dbReference type="Pfam" id="PF00338">
    <property type="entry name" value="Ribosomal_S10"/>
    <property type="match status" value="1"/>
</dbReference>
<dbReference type="PRINTS" id="PR00971">
    <property type="entry name" value="RIBOSOMALS10"/>
</dbReference>
<dbReference type="SMART" id="SM01403">
    <property type="entry name" value="Ribosomal_S10"/>
    <property type="match status" value="1"/>
</dbReference>
<dbReference type="SUPFAM" id="SSF54999">
    <property type="entry name" value="Ribosomal protein S10"/>
    <property type="match status" value="1"/>
</dbReference>
<dbReference type="PROSITE" id="PS00361">
    <property type="entry name" value="RIBOSOMAL_S10"/>
    <property type="match status" value="1"/>
</dbReference>
<comment type="function">
    <text evidence="1">Involved in the binding of tRNA to the ribosomes.</text>
</comment>
<comment type="subunit">
    <text evidence="1">Part of the 30S ribosomal subunit.</text>
</comment>
<comment type="similarity">
    <text evidence="1">Belongs to the universal ribosomal protein uS10 family.</text>
</comment>
<name>RS10_SALG2</name>
<proteinExistence type="inferred from homology"/>
<organism>
    <name type="scientific">Salmonella gallinarum (strain 287/91 / NCTC 13346)</name>
    <dbReference type="NCBI Taxonomy" id="550538"/>
    <lineage>
        <taxon>Bacteria</taxon>
        <taxon>Pseudomonadati</taxon>
        <taxon>Pseudomonadota</taxon>
        <taxon>Gammaproteobacteria</taxon>
        <taxon>Enterobacterales</taxon>
        <taxon>Enterobacteriaceae</taxon>
        <taxon>Salmonella</taxon>
    </lineage>
</organism>
<evidence type="ECO:0000255" key="1">
    <source>
        <dbReference type="HAMAP-Rule" id="MF_00508"/>
    </source>
</evidence>
<evidence type="ECO:0000305" key="2"/>
<accession>B5RH14</accession>
<reference key="1">
    <citation type="journal article" date="2008" name="Genome Res.">
        <title>Comparative genome analysis of Salmonella enteritidis PT4 and Salmonella gallinarum 287/91 provides insights into evolutionary and host adaptation pathways.</title>
        <authorList>
            <person name="Thomson N.R."/>
            <person name="Clayton D.J."/>
            <person name="Windhorst D."/>
            <person name="Vernikos G."/>
            <person name="Davidson S."/>
            <person name="Churcher C."/>
            <person name="Quail M.A."/>
            <person name="Stevens M."/>
            <person name="Jones M.A."/>
            <person name="Watson M."/>
            <person name="Barron A."/>
            <person name="Layton A."/>
            <person name="Pickard D."/>
            <person name="Kingsley R.A."/>
            <person name="Bignell A."/>
            <person name="Clark L."/>
            <person name="Harris B."/>
            <person name="Ormond D."/>
            <person name="Abdellah Z."/>
            <person name="Brooks K."/>
            <person name="Cherevach I."/>
            <person name="Chillingworth T."/>
            <person name="Woodward J."/>
            <person name="Norberczak H."/>
            <person name="Lord A."/>
            <person name="Arrowsmith C."/>
            <person name="Jagels K."/>
            <person name="Moule S."/>
            <person name="Mungall K."/>
            <person name="Saunders M."/>
            <person name="Whitehead S."/>
            <person name="Chabalgoity J.A."/>
            <person name="Maskell D."/>
            <person name="Humphreys T."/>
            <person name="Roberts M."/>
            <person name="Barrow P.A."/>
            <person name="Dougan G."/>
            <person name="Parkhill J."/>
        </authorList>
    </citation>
    <scope>NUCLEOTIDE SEQUENCE [LARGE SCALE GENOMIC DNA]</scope>
    <source>
        <strain>287/91 / NCTC 13346</strain>
    </source>
</reference>